<feature type="chain" id="PRO_0000119588" description="Glutamate--tRNA ligase">
    <location>
        <begin position="1"/>
        <end position="470"/>
    </location>
</feature>
<feature type="short sequence motif" description="'HIGH' region" evidence="1">
    <location>
        <begin position="9"/>
        <end position="19"/>
    </location>
</feature>
<feature type="short sequence motif" description="'KMSKS' region" evidence="1">
    <location>
        <begin position="236"/>
        <end position="240"/>
    </location>
</feature>
<feature type="binding site" evidence="1">
    <location>
        <position position="239"/>
    </location>
    <ligand>
        <name>ATP</name>
        <dbReference type="ChEBI" id="CHEBI:30616"/>
    </ligand>
</feature>
<protein>
    <recommendedName>
        <fullName evidence="1">Glutamate--tRNA ligase</fullName>
        <ecNumber evidence="1">6.1.1.17</ecNumber>
    </recommendedName>
    <alternativeName>
        <fullName evidence="1">Glutamyl-tRNA synthetase</fullName>
        <shortName evidence="1">GluRS</shortName>
    </alternativeName>
</protein>
<accession>Q5WVE0</accession>
<name>SYE_LEGPL</name>
<evidence type="ECO:0000255" key="1">
    <source>
        <dbReference type="HAMAP-Rule" id="MF_00022"/>
    </source>
</evidence>
<dbReference type="EC" id="6.1.1.17" evidence="1"/>
<dbReference type="EMBL" id="CR628337">
    <property type="protein sequence ID" value="CAH16114.1"/>
    <property type="molecule type" value="Genomic_DNA"/>
</dbReference>
<dbReference type="RefSeq" id="WP_011215873.1">
    <property type="nucleotide sequence ID" value="NC_006369.1"/>
</dbReference>
<dbReference type="SMR" id="Q5WVE0"/>
<dbReference type="KEGG" id="lpf:lpl1875"/>
<dbReference type="LegioList" id="lpl1875"/>
<dbReference type="HOGENOM" id="CLU_015768_6_3_6"/>
<dbReference type="Proteomes" id="UP000002517">
    <property type="component" value="Chromosome"/>
</dbReference>
<dbReference type="GO" id="GO:0005829">
    <property type="term" value="C:cytosol"/>
    <property type="evidence" value="ECO:0007669"/>
    <property type="project" value="TreeGrafter"/>
</dbReference>
<dbReference type="GO" id="GO:0005524">
    <property type="term" value="F:ATP binding"/>
    <property type="evidence" value="ECO:0007669"/>
    <property type="project" value="UniProtKB-UniRule"/>
</dbReference>
<dbReference type="GO" id="GO:0004818">
    <property type="term" value="F:glutamate-tRNA ligase activity"/>
    <property type="evidence" value="ECO:0007669"/>
    <property type="project" value="UniProtKB-UniRule"/>
</dbReference>
<dbReference type="GO" id="GO:0000049">
    <property type="term" value="F:tRNA binding"/>
    <property type="evidence" value="ECO:0007669"/>
    <property type="project" value="InterPro"/>
</dbReference>
<dbReference type="GO" id="GO:0008270">
    <property type="term" value="F:zinc ion binding"/>
    <property type="evidence" value="ECO:0007669"/>
    <property type="project" value="InterPro"/>
</dbReference>
<dbReference type="GO" id="GO:0006424">
    <property type="term" value="P:glutamyl-tRNA aminoacylation"/>
    <property type="evidence" value="ECO:0007669"/>
    <property type="project" value="UniProtKB-UniRule"/>
</dbReference>
<dbReference type="CDD" id="cd00808">
    <property type="entry name" value="GluRS_core"/>
    <property type="match status" value="1"/>
</dbReference>
<dbReference type="FunFam" id="3.40.50.620:FF:000007">
    <property type="entry name" value="Glutamate--tRNA ligase"/>
    <property type="match status" value="1"/>
</dbReference>
<dbReference type="Gene3D" id="1.10.10.350">
    <property type="match status" value="1"/>
</dbReference>
<dbReference type="Gene3D" id="3.40.50.620">
    <property type="entry name" value="HUPs"/>
    <property type="match status" value="1"/>
</dbReference>
<dbReference type="HAMAP" id="MF_00022">
    <property type="entry name" value="Glu_tRNA_synth_type1"/>
    <property type="match status" value="1"/>
</dbReference>
<dbReference type="InterPro" id="IPR045462">
    <property type="entry name" value="aa-tRNA-synth_I_cd-bd"/>
</dbReference>
<dbReference type="InterPro" id="IPR020751">
    <property type="entry name" value="aa-tRNA-synth_I_codon-bd_sub2"/>
</dbReference>
<dbReference type="InterPro" id="IPR001412">
    <property type="entry name" value="aa-tRNA-synth_I_CS"/>
</dbReference>
<dbReference type="InterPro" id="IPR008925">
    <property type="entry name" value="aa_tRNA-synth_I_cd-bd_sf"/>
</dbReference>
<dbReference type="InterPro" id="IPR004527">
    <property type="entry name" value="Glu-tRNA-ligase_bac/mito"/>
</dbReference>
<dbReference type="InterPro" id="IPR000924">
    <property type="entry name" value="Glu/Gln-tRNA-synth"/>
</dbReference>
<dbReference type="InterPro" id="IPR020058">
    <property type="entry name" value="Glu/Gln-tRNA-synth_Ib_cat-dom"/>
</dbReference>
<dbReference type="InterPro" id="IPR049940">
    <property type="entry name" value="GluQ/Sye"/>
</dbReference>
<dbReference type="InterPro" id="IPR033910">
    <property type="entry name" value="GluRS_core"/>
</dbReference>
<dbReference type="InterPro" id="IPR014729">
    <property type="entry name" value="Rossmann-like_a/b/a_fold"/>
</dbReference>
<dbReference type="NCBIfam" id="TIGR00464">
    <property type="entry name" value="gltX_bact"/>
    <property type="match status" value="1"/>
</dbReference>
<dbReference type="PANTHER" id="PTHR43311">
    <property type="entry name" value="GLUTAMATE--TRNA LIGASE"/>
    <property type="match status" value="1"/>
</dbReference>
<dbReference type="PANTHER" id="PTHR43311:SF2">
    <property type="entry name" value="GLUTAMATE--TRNA LIGASE, MITOCHONDRIAL-RELATED"/>
    <property type="match status" value="1"/>
</dbReference>
<dbReference type="Pfam" id="PF19269">
    <property type="entry name" value="Anticodon_2"/>
    <property type="match status" value="1"/>
</dbReference>
<dbReference type="Pfam" id="PF00749">
    <property type="entry name" value="tRNA-synt_1c"/>
    <property type="match status" value="1"/>
</dbReference>
<dbReference type="PRINTS" id="PR00987">
    <property type="entry name" value="TRNASYNTHGLU"/>
</dbReference>
<dbReference type="SUPFAM" id="SSF48163">
    <property type="entry name" value="An anticodon-binding domain of class I aminoacyl-tRNA synthetases"/>
    <property type="match status" value="1"/>
</dbReference>
<dbReference type="SUPFAM" id="SSF52374">
    <property type="entry name" value="Nucleotidylyl transferase"/>
    <property type="match status" value="1"/>
</dbReference>
<dbReference type="PROSITE" id="PS00178">
    <property type="entry name" value="AA_TRNA_LIGASE_I"/>
    <property type="match status" value="1"/>
</dbReference>
<reference key="1">
    <citation type="journal article" date="2004" name="Nat. Genet.">
        <title>Evidence in the Legionella pneumophila genome for exploitation of host cell functions and high genome plasticity.</title>
        <authorList>
            <person name="Cazalet C."/>
            <person name="Rusniok C."/>
            <person name="Brueggemann H."/>
            <person name="Zidane N."/>
            <person name="Magnier A."/>
            <person name="Ma L."/>
            <person name="Tichit M."/>
            <person name="Jarraud S."/>
            <person name="Bouchier C."/>
            <person name="Vandenesch F."/>
            <person name="Kunst F."/>
            <person name="Etienne J."/>
            <person name="Glaser P."/>
            <person name="Buchrieser C."/>
        </authorList>
    </citation>
    <scope>NUCLEOTIDE SEQUENCE [LARGE SCALE GENOMIC DNA]</scope>
    <source>
        <strain>Lens</strain>
    </source>
</reference>
<comment type="function">
    <text evidence="1">Catalyzes the attachment of glutamate to tRNA(Glu) in a two-step reaction: glutamate is first activated by ATP to form Glu-AMP and then transferred to the acceptor end of tRNA(Glu).</text>
</comment>
<comment type="catalytic activity">
    <reaction evidence="1">
        <text>tRNA(Glu) + L-glutamate + ATP = L-glutamyl-tRNA(Glu) + AMP + diphosphate</text>
        <dbReference type="Rhea" id="RHEA:23540"/>
        <dbReference type="Rhea" id="RHEA-COMP:9663"/>
        <dbReference type="Rhea" id="RHEA-COMP:9680"/>
        <dbReference type="ChEBI" id="CHEBI:29985"/>
        <dbReference type="ChEBI" id="CHEBI:30616"/>
        <dbReference type="ChEBI" id="CHEBI:33019"/>
        <dbReference type="ChEBI" id="CHEBI:78442"/>
        <dbReference type="ChEBI" id="CHEBI:78520"/>
        <dbReference type="ChEBI" id="CHEBI:456215"/>
        <dbReference type="EC" id="6.1.1.17"/>
    </reaction>
</comment>
<comment type="subunit">
    <text evidence="1">Monomer.</text>
</comment>
<comment type="subcellular location">
    <subcellularLocation>
        <location evidence="1">Cytoplasm</location>
    </subcellularLocation>
</comment>
<comment type="similarity">
    <text evidence="1">Belongs to the class-I aminoacyl-tRNA synthetase family. Glutamate--tRNA ligase type 1 subfamily.</text>
</comment>
<keyword id="KW-0030">Aminoacyl-tRNA synthetase</keyword>
<keyword id="KW-0067">ATP-binding</keyword>
<keyword id="KW-0963">Cytoplasm</keyword>
<keyword id="KW-0436">Ligase</keyword>
<keyword id="KW-0547">Nucleotide-binding</keyword>
<keyword id="KW-0648">Protein biosynthesis</keyword>
<gene>
    <name evidence="1" type="primary">gltX</name>
    <name type="ordered locus">lpl1875</name>
</gene>
<sequence length="470" mass="53548">MTVRTRFAPSPTGFLHVGGVRTALFSWLYAKHHNGQFILRIEDTDRERSTQESVQAILDGMAWLGLNFDEGPYYQTERYARYQQVAQQLLEEGKAYRCQCSKERLEALREAQLAAKEKPRYDGHCRNQSLPDSGIPYVIRFRNPDGGIVSFHDEVYGDIHVDNSELDDLILVRSDGHPTYNFAVVIDDWDMKITHVIRGDDHINNTPRQINLFKALDAPVPVFAHLPMILGEDGKRLSKRHGAVSVLQFKELGVLPHALLNYLVRLGWSHGDQEIFSVQEMITSFDLKNVSRGVSSFNYDKLYWLNQHYQKSDSPESVANALQWHFEQAGIDLNQGPDLKDLVAVQAERCKSLAEMCQISQYFYTDTIEYNEDAVKKHLRPVVLEPLMVLHERLKALDEWKNDKIQECINDVSLQFDLNLGKIAQPLRVAVTGSGTSPSIDMTLALLGKNKSIKRLEDALEKIRARASVV</sequence>
<proteinExistence type="inferred from homology"/>
<organism>
    <name type="scientific">Legionella pneumophila (strain Lens)</name>
    <dbReference type="NCBI Taxonomy" id="297245"/>
    <lineage>
        <taxon>Bacteria</taxon>
        <taxon>Pseudomonadati</taxon>
        <taxon>Pseudomonadota</taxon>
        <taxon>Gammaproteobacteria</taxon>
        <taxon>Legionellales</taxon>
        <taxon>Legionellaceae</taxon>
        <taxon>Legionella</taxon>
    </lineage>
</organism>